<accession>Q0TPR8</accession>
<proteinExistence type="inferred from homology"/>
<gene>
    <name evidence="1" type="primary">rbfA</name>
    <name type="ordered locus">CPF_1939</name>
</gene>
<feature type="chain" id="PRO_1000000098" description="Ribosome-binding factor A">
    <location>
        <begin position="1"/>
        <end position="116"/>
    </location>
</feature>
<name>RBFA_CLOP1</name>
<comment type="function">
    <text evidence="1">One of several proteins that assist in the late maturation steps of the functional core of the 30S ribosomal subunit. Associates with free 30S ribosomal subunits (but not with 30S subunits that are part of 70S ribosomes or polysomes). Required for efficient processing of 16S rRNA. May interact with the 5'-terminal helix region of 16S rRNA.</text>
</comment>
<comment type="subunit">
    <text evidence="1">Monomer. Binds 30S ribosomal subunits, but not 50S ribosomal subunits or 70S ribosomes.</text>
</comment>
<comment type="subcellular location">
    <subcellularLocation>
        <location evidence="1">Cytoplasm</location>
    </subcellularLocation>
</comment>
<comment type="similarity">
    <text evidence="1">Belongs to the RbfA family.</text>
</comment>
<reference key="1">
    <citation type="journal article" date="2006" name="Genome Res.">
        <title>Skewed genomic variability in strains of the toxigenic bacterial pathogen, Clostridium perfringens.</title>
        <authorList>
            <person name="Myers G.S.A."/>
            <person name="Rasko D.A."/>
            <person name="Cheung J.K."/>
            <person name="Ravel J."/>
            <person name="Seshadri R."/>
            <person name="DeBoy R.T."/>
            <person name="Ren Q."/>
            <person name="Varga J."/>
            <person name="Awad M.M."/>
            <person name="Brinkac L.M."/>
            <person name="Daugherty S.C."/>
            <person name="Haft D.H."/>
            <person name="Dodson R.J."/>
            <person name="Madupu R."/>
            <person name="Nelson W.C."/>
            <person name="Rosovitz M.J."/>
            <person name="Sullivan S.A."/>
            <person name="Khouri H."/>
            <person name="Dimitrov G.I."/>
            <person name="Watkins K.L."/>
            <person name="Mulligan S."/>
            <person name="Benton J."/>
            <person name="Radune D."/>
            <person name="Fisher D.J."/>
            <person name="Atkins H.S."/>
            <person name="Hiscox T."/>
            <person name="Jost B.H."/>
            <person name="Billington S.J."/>
            <person name="Songer J.G."/>
            <person name="McClane B.A."/>
            <person name="Titball R.W."/>
            <person name="Rood J.I."/>
            <person name="Melville S.B."/>
            <person name="Paulsen I.T."/>
        </authorList>
    </citation>
    <scope>NUCLEOTIDE SEQUENCE [LARGE SCALE GENOMIC DNA]</scope>
    <source>
        <strain>ATCC 13124 / DSM 756 / JCM 1290 / NCIMB 6125 / NCTC 8237 / S 107 / Type A</strain>
    </source>
</reference>
<sequence length="116" mass="13448">MANFRGKRINEEVRKEVSDIIRNQIKDPRLTAMVSVTQVEVTKDLRYAKVFVSLFAKNDEEKEESLKALKSSAGFIRREVGNRVKLRSTPEILFEEDNSIDNAMYIESLLNKIKEK</sequence>
<protein>
    <recommendedName>
        <fullName evidence="1">Ribosome-binding factor A</fullName>
    </recommendedName>
</protein>
<evidence type="ECO:0000255" key="1">
    <source>
        <dbReference type="HAMAP-Rule" id="MF_00003"/>
    </source>
</evidence>
<organism>
    <name type="scientific">Clostridium perfringens (strain ATCC 13124 / DSM 756 / JCM 1290 / NCIMB 6125 / NCTC 8237 / Type A)</name>
    <dbReference type="NCBI Taxonomy" id="195103"/>
    <lineage>
        <taxon>Bacteria</taxon>
        <taxon>Bacillati</taxon>
        <taxon>Bacillota</taxon>
        <taxon>Clostridia</taxon>
        <taxon>Eubacteriales</taxon>
        <taxon>Clostridiaceae</taxon>
        <taxon>Clostridium</taxon>
    </lineage>
</organism>
<keyword id="KW-0963">Cytoplasm</keyword>
<keyword id="KW-0690">Ribosome biogenesis</keyword>
<dbReference type="EMBL" id="CP000246">
    <property type="protein sequence ID" value="ABG84351.1"/>
    <property type="molecule type" value="Genomic_DNA"/>
</dbReference>
<dbReference type="RefSeq" id="WP_003449473.1">
    <property type="nucleotide sequence ID" value="NC_008261.1"/>
</dbReference>
<dbReference type="SMR" id="Q0TPR8"/>
<dbReference type="STRING" id="195103.CPF_1939"/>
<dbReference type="PaxDb" id="195103-CPF_1939"/>
<dbReference type="GeneID" id="93001777"/>
<dbReference type="KEGG" id="cpf:CPF_1939"/>
<dbReference type="eggNOG" id="COG0858">
    <property type="taxonomic scope" value="Bacteria"/>
</dbReference>
<dbReference type="HOGENOM" id="CLU_089475_6_3_9"/>
<dbReference type="Proteomes" id="UP000001823">
    <property type="component" value="Chromosome"/>
</dbReference>
<dbReference type="GO" id="GO:0005829">
    <property type="term" value="C:cytosol"/>
    <property type="evidence" value="ECO:0007669"/>
    <property type="project" value="TreeGrafter"/>
</dbReference>
<dbReference type="GO" id="GO:0043024">
    <property type="term" value="F:ribosomal small subunit binding"/>
    <property type="evidence" value="ECO:0007669"/>
    <property type="project" value="TreeGrafter"/>
</dbReference>
<dbReference type="GO" id="GO:0030490">
    <property type="term" value="P:maturation of SSU-rRNA"/>
    <property type="evidence" value="ECO:0007669"/>
    <property type="project" value="UniProtKB-UniRule"/>
</dbReference>
<dbReference type="Gene3D" id="3.30.300.20">
    <property type="match status" value="1"/>
</dbReference>
<dbReference type="HAMAP" id="MF_00003">
    <property type="entry name" value="RbfA"/>
    <property type="match status" value="1"/>
</dbReference>
<dbReference type="InterPro" id="IPR015946">
    <property type="entry name" value="KH_dom-like_a/b"/>
</dbReference>
<dbReference type="InterPro" id="IPR000238">
    <property type="entry name" value="RbfA"/>
</dbReference>
<dbReference type="InterPro" id="IPR023799">
    <property type="entry name" value="RbfA_dom_sf"/>
</dbReference>
<dbReference type="InterPro" id="IPR020053">
    <property type="entry name" value="Ribosome-bd_factorA_CS"/>
</dbReference>
<dbReference type="NCBIfam" id="TIGR00082">
    <property type="entry name" value="rbfA"/>
    <property type="match status" value="1"/>
</dbReference>
<dbReference type="PANTHER" id="PTHR33515">
    <property type="entry name" value="RIBOSOME-BINDING FACTOR A, CHLOROPLASTIC-RELATED"/>
    <property type="match status" value="1"/>
</dbReference>
<dbReference type="PANTHER" id="PTHR33515:SF1">
    <property type="entry name" value="RIBOSOME-BINDING FACTOR A, CHLOROPLASTIC-RELATED"/>
    <property type="match status" value="1"/>
</dbReference>
<dbReference type="Pfam" id="PF02033">
    <property type="entry name" value="RBFA"/>
    <property type="match status" value="1"/>
</dbReference>
<dbReference type="SUPFAM" id="SSF89919">
    <property type="entry name" value="Ribosome-binding factor A, RbfA"/>
    <property type="match status" value="1"/>
</dbReference>
<dbReference type="PROSITE" id="PS01319">
    <property type="entry name" value="RBFA"/>
    <property type="match status" value="1"/>
</dbReference>